<reference evidence="7 8" key="1">
    <citation type="journal article" date="2004" name="Insect Biochem. Mol. Biol.">
        <title>Beta-1,3-glucan recognition protein-2 (betaGRP-2) from Manduca sexta: an acute-phase protein that binds beta-1,3-glucan and lipoteichoic acid to aggregate fungi and bacteria and stimulate prophenoloxidase activation.</title>
        <authorList>
            <person name="Jiang H."/>
            <person name="Ma C."/>
            <person name="Lu Z.-Q."/>
            <person name="Kanost M.R."/>
        </authorList>
    </citation>
    <scope>NUCLEOTIDE SEQUENCE [MRNA]</scope>
    <scope>PROTEIN SEQUENCE OF 19-45</scope>
    <scope>FUNCTION</scope>
    <scope>SUBUNIT</scope>
    <scope>SUBCELLULAR LOCATION</scope>
    <scope>TISSUE SPECIFICITY</scope>
    <scope>DEVELOPMENTAL STAGE</scope>
    <scope>INDUCTION</scope>
    <scope>GLYCOSYLATION</scope>
    <scope>MASS SPECTROMETRY</scope>
    <source>
        <tissue evidence="5">Cuticle</tissue>
        <tissue evidence="5">Fat body</tissue>
    </source>
</reference>
<accession>Q8ISB6</accession>
<keyword id="KW-0903">Direct protein sequencing</keyword>
<keyword id="KW-0325">Glycoprotein</keyword>
<keyword id="KW-0391">Immunity</keyword>
<keyword id="KW-0399">Innate immunity</keyword>
<keyword id="KW-0964">Secreted</keyword>
<keyword id="KW-0732">Signal</keyword>
<evidence type="ECO:0000255" key="1"/>
<evidence type="ECO:0000255" key="2">
    <source>
        <dbReference type="PROSITE-ProRule" id="PRU01098"/>
    </source>
</evidence>
<evidence type="ECO:0000255" key="3">
    <source>
        <dbReference type="PROSITE-ProRule" id="PRU01314"/>
    </source>
</evidence>
<evidence type="ECO:0000256" key="4">
    <source>
        <dbReference type="SAM" id="MobiDB-lite"/>
    </source>
</evidence>
<evidence type="ECO:0000269" key="5">
    <source>
    </source>
</evidence>
<evidence type="ECO:0000303" key="6">
    <source>
    </source>
</evidence>
<evidence type="ECO:0000305" key="7"/>
<evidence type="ECO:0000312" key="8">
    <source>
        <dbReference type="EMBL" id="AAN10151.1"/>
    </source>
</evidence>
<dbReference type="EMBL" id="AY135522">
    <property type="protein sequence ID" value="AAN10151.1"/>
    <property type="molecule type" value="mRNA"/>
</dbReference>
<dbReference type="BMRB" id="Q8ISB6"/>
<dbReference type="SMR" id="Q8ISB6"/>
<dbReference type="CAZy" id="CBM39">
    <property type="family name" value="Carbohydrate-Binding Module Family 39"/>
</dbReference>
<dbReference type="CAZy" id="GH16">
    <property type="family name" value="Glycoside Hydrolase Family 16"/>
</dbReference>
<dbReference type="OrthoDB" id="4781at2759"/>
<dbReference type="GO" id="GO:0005576">
    <property type="term" value="C:extracellular region"/>
    <property type="evidence" value="ECO:0000314"/>
    <property type="project" value="UniProtKB"/>
</dbReference>
<dbReference type="GO" id="GO:0030246">
    <property type="term" value="F:carbohydrate binding"/>
    <property type="evidence" value="ECO:0007669"/>
    <property type="project" value="InterPro"/>
</dbReference>
<dbReference type="GO" id="GO:0004553">
    <property type="term" value="F:hydrolase activity, hydrolyzing O-glycosyl compounds"/>
    <property type="evidence" value="ECO:0007669"/>
    <property type="project" value="InterPro"/>
</dbReference>
<dbReference type="GO" id="GO:0038187">
    <property type="term" value="F:pattern recognition receptor activity"/>
    <property type="evidence" value="ECO:0000314"/>
    <property type="project" value="UniProtKB"/>
</dbReference>
<dbReference type="GO" id="GO:0005975">
    <property type="term" value="P:carbohydrate metabolic process"/>
    <property type="evidence" value="ECO:0007669"/>
    <property type="project" value="InterPro"/>
</dbReference>
<dbReference type="GO" id="GO:0002752">
    <property type="term" value="P:cell surface pattern recognition receptor signaling pathway"/>
    <property type="evidence" value="ECO:0000314"/>
    <property type="project" value="UniProtKB"/>
</dbReference>
<dbReference type="GO" id="GO:0045087">
    <property type="term" value="P:innate immune response"/>
    <property type="evidence" value="ECO:0007669"/>
    <property type="project" value="UniProtKB-KW"/>
</dbReference>
<dbReference type="GO" id="GO:0045088">
    <property type="term" value="P:regulation of innate immune response"/>
    <property type="evidence" value="ECO:0000314"/>
    <property type="project" value="UniProtKB"/>
</dbReference>
<dbReference type="CDD" id="cd02179">
    <property type="entry name" value="GH16_beta_GRP"/>
    <property type="match status" value="1"/>
</dbReference>
<dbReference type="FunFam" id="2.60.120.200:FF:000235">
    <property type="entry name" value="Beta-1,3-glucan-binding protein"/>
    <property type="match status" value="1"/>
</dbReference>
<dbReference type="FunFam" id="2.60.40.2140:FF:000001">
    <property type="entry name" value="Beta-1,3-glucan-binding protein"/>
    <property type="match status" value="1"/>
</dbReference>
<dbReference type="Gene3D" id="2.60.120.200">
    <property type="match status" value="1"/>
</dbReference>
<dbReference type="Gene3D" id="2.60.40.2140">
    <property type="entry name" value="Beta-1,3-glucan-recognition protein, N-terminal domain"/>
    <property type="match status" value="1"/>
</dbReference>
<dbReference type="InterPro" id="IPR031756">
    <property type="entry name" value="BGBP_N"/>
</dbReference>
<dbReference type="InterPro" id="IPR043030">
    <property type="entry name" value="BGBP_N_sf"/>
</dbReference>
<dbReference type="InterPro" id="IPR013320">
    <property type="entry name" value="ConA-like_dom_sf"/>
</dbReference>
<dbReference type="InterPro" id="IPR000757">
    <property type="entry name" value="GH16"/>
</dbReference>
<dbReference type="InterPro" id="IPR035806">
    <property type="entry name" value="GH16_GRP_C"/>
</dbReference>
<dbReference type="InterPro" id="IPR050546">
    <property type="entry name" value="Glycosyl_Hydrlase_16"/>
</dbReference>
<dbReference type="PANTHER" id="PTHR10963">
    <property type="entry name" value="GLYCOSYL HYDROLASE-RELATED"/>
    <property type="match status" value="1"/>
</dbReference>
<dbReference type="PANTHER" id="PTHR10963:SF60">
    <property type="entry name" value="GRAM-NEGATIVE BACTERIA-BINDING PROTEIN 1-RELATED"/>
    <property type="match status" value="1"/>
</dbReference>
<dbReference type="Pfam" id="PF15886">
    <property type="entry name" value="CBM39"/>
    <property type="match status" value="1"/>
</dbReference>
<dbReference type="SUPFAM" id="SSF49899">
    <property type="entry name" value="Concanavalin A-like lectins/glucanases"/>
    <property type="match status" value="1"/>
</dbReference>
<dbReference type="PROSITE" id="PS51969">
    <property type="entry name" value="CBM39"/>
    <property type="match status" value="1"/>
</dbReference>
<dbReference type="PROSITE" id="PS51762">
    <property type="entry name" value="GH16_2"/>
    <property type="match status" value="1"/>
</dbReference>
<name>BGBP2_MANSE</name>
<protein>
    <recommendedName>
        <fullName>Beta-1,3-glucan-binding protein 2</fullName>
        <shortName>BGBP-2</shortName>
    </recommendedName>
    <alternativeName>
        <fullName>Beta-1,3-glucan recognition protein 2</fullName>
        <shortName>BetaGRP-2</shortName>
    </alternativeName>
</protein>
<feature type="signal peptide" evidence="1 6">
    <location>
        <begin position="1"/>
        <end position="18"/>
    </location>
</feature>
<feature type="chain" id="PRO_0000002822" description="Beta-1,3-glucan-binding protein 2">
    <location>
        <begin position="19"/>
        <end position="482"/>
    </location>
</feature>
<feature type="domain" description="CBM39" evidence="3">
    <location>
        <begin position="23"/>
        <end position="122"/>
    </location>
</feature>
<feature type="domain" description="GH16" evidence="2">
    <location>
        <begin position="128"/>
        <end position="482"/>
    </location>
</feature>
<feature type="region of interest" description="Disordered" evidence="4">
    <location>
        <begin position="127"/>
        <end position="153"/>
    </location>
</feature>
<feature type="glycosylation site" description="N-linked (GlcNAc...) asparagine" evidence="1">
    <location>
        <position position="124"/>
    </location>
</feature>
<feature type="glycosylation site" description="N-linked (GlcNAc...) asparagine" evidence="1">
    <location>
        <position position="189"/>
    </location>
</feature>
<sequence>MWIKSVCLFATIAGCLGQRGGPYKVPDAKLEAIYPKGLRVSVPDDGYSLFAFHGKLNEEMEGLEAGHWSRDITKAKQGRWIFRDRNAELKLGDKIYFWTYVIKDGLGYRQDNGEWTVTEFVNENGTVVDTSTAPPPVAPAVSEEDQSPGPQWRPCERSLTESLARERVCKGSLVFSEDFDGSSLADLGNWTAEVRFPGEPDYPYNLYTTDGTVGFESGSLVVRPVMTESKYHEGIIYDRLDLERCTGQLGTLECRRESSGGQIVPPVMTAKLATRRSFAFKFGRIDIKAKMPRGDWLIPELNLEPLDNIYGNQRYASGLMRVAFVRGNDVYAKKLYGGPIMSDADPFRSMLLKDKQGLANWNNDYHVYSLLWKPNGLELMVDGEVYGTIDAGDGFYQIAKNNLVSHASQWLKGTVMAPFDEKFFITLGLRVAGIHDFTDGPGKPWENKGTKAMINFWNNRFRWFPTWHDTSLKVDYVRVYAL</sequence>
<proteinExistence type="evidence at protein level"/>
<comment type="function">
    <text evidence="5">Involved in the recognition of invading microorganisms. Binds specifically to beta-1,3-glucan and lipoteichoic acid and causes aggregation of invading microorganisms. Binding to beta-1,3-glucan activates the phenoloxidase cascade.</text>
</comment>
<comment type="subunit">
    <text evidence="5">Monomer.</text>
</comment>
<comment type="subcellular location">
    <subcellularLocation>
        <location evidence="5">Secreted</location>
    </subcellularLocation>
</comment>
<comment type="tissue specificity">
    <text evidence="5">Cuticle and fat body.</text>
</comment>
<comment type="developmental stage">
    <text evidence="5">Expression levels are low during larval feeding stages and increase dramatically at the start of the wandering stage.</text>
</comment>
<comment type="induction">
    <text evidence="5">By bacterial and yeast infection.</text>
</comment>
<comment type="PTM">
    <text evidence="5">N-glycosylated.</text>
</comment>
<comment type="mass spectrometry"/>
<comment type="similarity">
    <text evidence="7">Belongs to the insect beta-1,3-glucan binding protein family.</text>
</comment>
<organism>
    <name type="scientific">Manduca sexta</name>
    <name type="common">Tobacco hawkmoth</name>
    <name type="synonym">Tobacco hornworm</name>
    <dbReference type="NCBI Taxonomy" id="7130"/>
    <lineage>
        <taxon>Eukaryota</taxon>
        <taxon>Metazoa</taxon>
        <taxon>Ecdysozoa</taxon>
        <taxon>Arthropoda</taxon>
        <taxon>Hexapoda</taxon>
        <taxon>Insecta</taxon>
        <taxon>Pterygota</taxon>
        <taxon>Neoptera</taxon>
        <taxon>Endopterygota</taxon>
        <taxon>Lepidoptera</taxon>
        <taxon>Glossata</taxon>
        <taxon>Ditrysia</taxon>
        <taxon>Bombycoidea</taxon>
        <taxon>Sphingidae</taxon>
        <taxon>Sphinginae</taxon>
        <taxon>Sphingini</taxon>
        <taxon>Manduca</taxon>
    </lineage>
</organism>